<protein>
    <recommendedName>
        <fullName>Cathepsin B</fullName>
        <ecNumber evidence="1">3.4.22.1</ecNumber>
    </recommendedName>
    <alternativeName>
        <fullName>Cathepsin B1</fullName>
    </alternativeName>
    <component>
        <recommendedName>
            <fullName evidence="1">Cathepsin B light chain</fullName>
        </recommendedName>
    </component>
    <component>
        <recommendedName>
            <fullName evidence="1">Cathepsin B heavy chain</fullName>
        </recommendedName>
    </component>
</protein>
<feature type="signal peptide" evidence="2">
    <location>
        <begin position="1"/>
        <end position="17"/>
    </location>
</feature>
<feature type="propeptide" id="PRO_0000026148" description="Activation peptide" evidence="1">
    <location>
        <begin position="18"/>
        <end position="79"/>
    </location>
</feature>
<feature type="chain" id="PRO_0000026149" description="Cathepsin B">
    <location>
        <begin position="80"/>
        <end position="333"/>
    </location>
</feature>
<feature type="chain" id="PRO_0000026150" description="Cathepsin B light chain" evidence="1">
    <location>
        <begin position="80"/>
        <end position="126"/>
    </location>
</feature>
<feature type="chain" id="PRO_0000026151" description="Cathepsin B heavy chain" evidence="1">
    <location>
        <begin position="129"/>
        <end position="333"/>
    </location>
</feature>
<feature type="propeptide" id="PRO_0000026152" evidence="1">
    <location>
        <begin position="334"/>
        <end position="339"/>
    </location>
</feature>
<feature type="active site" evidence="3">
    <location>
        <position position="108"/>
    </location>
</feature>
<feature type="active site" evidence="4">
    <location>
        <position position="278"/>
    </location>
</feature>
<feature type="active site" evidence="5">
    <location>
        <position position="298"/>
    </location>
</feature>
<feature type="modified residue" description="N6-acetyllysine" evidence="8">
    <location>
        <position position="220"/>
    </location>
</feature>
<feature type="glycosylation site" description="N-linked (GlcNAc...) asparagine" evidence="1">
    <location>
        <position position="192"/>
    </location>
</feature>
<feature type="disulfide bond" evidence="1">
    <location>
        <begin position="93"/>
        <end position="122"/>
    </location>
</feature>
<feature type="disulfide bond" evidence="1">
    <location>
        <begin position="105"/>
        <end position="150"/>
    </location>
</feature>
<feature type="disulfide bond" evidence="1">
    <location>
        <begin position="141"/>
        <end position="207"/>
    </location>
</feature>
<feature type="disulfide bond" evidence="1">
    <location>
        <begin position="142"/>
        <end position="146"/>
    </location>
</feature>
<feature type="disulfide bond" evidence="1">
    <location>
        <begin position="179"/>
        <end position="211"/>
    </location>
</feature>
<feature type="disulfide bond" evidence="1">
    <location>
        <begin position="187"/>
        <end position="198"/>
    </location>
</feature>
<feature type="sequence conflict" description="In Ref. 3; AAA37494." evidence="7" ref="3">
    <original>S</original>
    <variation>N</variation>
    <location>
        <position position="160"/>
    </location>
</feature>
<feature type="sequence conflict" description="In Ref. 3; AAA37494." evidence="7" ref="3">
    <original>N</original>
    <variation>D</variation>
    <location>
        <position position="174"/>
    </location>
</feature>
<feature type="sequence conflict" description="In Ref. 3; AAA37494." evidence="7" ref="3">
    <original>V</original>
    <variation>I</variation>
    <location>
        <position position="177"/>
    </location>
</feature>
<feature type="sequence conflict" description="In Ref. 3; AAA37494." evidence="7" ref="3">
    <original>G</original>
    <variation>V</variation>
    <location>
        <position position="284"/>
    </location>
</feature>
<proteinExistence type="evidence at protein level"/>
<gene>
    <name type="primary">Ctsb</name>
</gene>
<evidence type="ECO:0000250" key="1">
    <source>
        <dbReference type="UniProtKB" id="P07858"/>
    </source>
</evidence>
<evidence type="ECO:0000255" key="2"/>
<evidence type="ECO:0000255" key="3">
    <source>
        <dbReference type="PROSITE-ProRule" id="PRU10088"/>
    </source>
</evidence>
<evidence type="ECO:0000255" key="4">
    <source>
        <dbReference type="PROSITE-ProRule" id="PRU10089"/>
    </source>
</evidence>
<evidence type="ECO:0000255" key="5">
    <source>
        <dbReference type="PROSITE-ProRule" id="PRU10090"/>
    </source>
</evidence>
<evidence type="ECO:0000269" key="6">
    <source>
    </source>
</evidence>
<evidence type="ECO:0000305" key="7"/>
<evidence type="ECO:0007744" key="8">
    <source>
    </source>
</evidence>
<accession>P10605</accession>
<accession>Q3UDW7</accession>
<name>CATB_MOUSE</name>
<comment type="function">
    <text evidence="1 6">Thiol protease which is believed to participate in intracellular degradation and turnover of proteins (By similarity). Cleaves matrix extracellular phosphoglycoprotein MEPE (By similarity). Involved in the solubilization of cross-linked TG/thyroglobulin in the thyroid follicle lumen (PubMed:12782676). Has also been implicated in tumor invasion and metastasis (By similarity).</text>
</comment>
<comment type="catalytic activity">
    <reaction evidence="1">
        <text>Hydrolysis of proteins with broad specificity for peptide bonds. Preferentially cleaves -Arg-Arg-|-Xaa bonds in small molecule substrates (thus differing from cathepsin L). In addition to being an endopeptidase, shows peptidyl-dipeptidase activity, liberating C-terminal dipeptides.</text>
        <dbReference type="EC" id="3.4.22.1"/>
    </reaction>
</comment>
<comment type="subunit">
    <text evidence="1">Dimer of a heavy chain and a light chain cross-linked by a disulfide bond. Interacts with SRPX2. Directly interacts with SHKBP1.</text>
</comment>
<comment type="subcellular location">
    <subcellularLocation>
        <location evidence="6">Lysosome</location>
    </subcellularLocation>
    <subcellularLocation>
        <location evidence="1">Melanosome</location>
    </subcellularLocation>
    <subcellularLocation>
        <location evidence="6">Secreted</location>
        <location evidence="6">Extracellular space</location>
    </subcellularLocation>
    <subcellularLocation>
        <location evidence="6">Apical cell membrane</location>
        <topology evidence="6">Peripheral membrane protein</topology>
        <orientation evidence="6">Extracellular side</orientation>
    </subcellularLocation>
    <text evidence="6">Localizes to the lumen of thyroid follicles and to the apical membrane of thyroid epithelial cells.</text>
</comment>
<comment type="tissue specificity">
    <text evidence="6">Expressed in thyroid epithelial cells.</text>
</comment>
<comment type="disruption phenotype">
    <text evidence="6">Enlarged thyroid follicles, reduced extension of the thyroid epithelium, and increased levels of Tg/thyroglobulin in the thyroid follicles which fails to assemble into multilayers. Lysosomes are enlarged and CTSK/cathepsin K is absent from the thyroid follicle lumen and mis-localizes to the apical membrane of thyroid epithelial cells.</text>
</comment>
<comment type="similarity">
    <text evidence="3 4 5">Belongs to the peptidase C1 family.</text>
</comment>
<reference key="1">
    <citation type="journal article" date="1991" name="DNA Cell Biol.">
        <title>The structure of the mouse cathepsin B gene and its putative promoter.</title>
        <authorList>
            <person name="Qian F."/>
            <person name="Frankfater A."/>
            <person name="Chan S.J."/>
            <person name="Steiner D.F."/>
        </authorList>
    </citation>
    <scope>NUCLEOTIDE SEQUENCE</scope>
</reference>
<reference key="2">
    <citation type="journal article" date="1990" name="FEBS Lett.">
        <title>Gene structure of mouse cathepsin B.</title>
        <authorList>
            <person name="Ferrara M."/>
            <person name="Wojcik F."/>
            <person name="Rhaissi H."/>
            <person name="Mordier S."/>
            <person name="Roux M.-P."/>
            <person name="Bechet D."/>
        </authorList>
    </citation>
    <scope>NUCLEOTIDE SEQUENCE</scope>
</reference>
<reference key="3">
    <citation type="journal article" date="1986" name="Proc. Natl. Acad. Sci. U.S.A.">
        <title>Nucleotide and predicted amino acid sequences of cloned human and mouse preprocathepsin B cDNAs.</title>
        <authorList>
            <person name="Chan S.J."/>
            <person name="San Segundo B."/>
            <person name="McCormick M.B."/>
            <person name="Steiner D.F."/>
        </authorList>
    </citation>
    <scope>NUCLEOTIDE SEQUENCE [MRNA]</scope>
</reference>
<reference key="4">
    <citation type="journal article" date="1991" name="Anticancer Res.">
        <title>Characterization of multiple cathepsin B mRNAs in murine B16a melanoma.</title>
        <authorList>
            <person name="Qian F."/>
            <person name="Frankfater A."/>
            <person name="Steiner D.F."/>
            <person name="Bajkowski A.S."/>
            <person name="Chan S.J."/>
        </authorList>
    </citation>
    <scope>NUCLEOTIDE SEQUENCE</scope>
</reference>
<reference key="5">
    <citation type="journal article" date="2005" name="Science">
        <title>The transcriptional landscape of the mammalian genome.</title>
        <authorList>
            <person name="Carninci P."/>
            <person name="Kasukawa T."/>
            <person name="Katayama S."/>
            <person name="Gough J."/>
            <person name="Frith M.C."/>
            <person name="Maeda N."/>
            <person name="Oyama R."/>
            <person name="Ravasi T."/>
            <person name="Lenhard B."/>
            <person name="Wells C."/>
            <person name="Kodzius R."/>
            <person name="Shimokawa K."/>
            <person name="Bajic V.B."/>
            <person name="Brenner S.E."/>
            <person name="Batalov S."/>
            <person name="Forrest A.R."/>
            <person name="Zavolan M."/>
            <person name="Davis M.J."/>
            <person name="Wilming L.G."/>
            <person name="Aidinis V."/>
            <person name="Allen J.E."/>
            <person name="Ambesi-Impiombato A."/>
            <person name="Apweiler R."/>
            <person name="Aturaliya R.N."/>
            <person name="Bailey T.L."/>
            <person name="Bansal M."/>
            <person name="Baxter L."/>
            <person name="Beisel K.W."/>
            <person name="Bersano T."/>
            <person name="Bono H."/>
            <person name="Chalk A.M."/>
            <person name="Chiu K.P."/>
            <person name="Choudhary V."/>
            <person name="Christoffels A."/>
            <person name="Clutterbuck D.R."/>
            <person name="Crowe M.L."/>
            <person name="Dalla E."/>
            <person name="Dalrymple B.P."/>
            <person name="de Bono B."/>
            <person name="Della Gatta G."/>
            <person name="di Bernardo D."/>
            <person name="Down T."/>
            <person name="Engstrom P."/>
            <person name="Fagiolini M."/>
            <person name="Faulkner G."/>
            <person name="Fletcher C.F."/>
            <person name="Fukushima T."/>
            <person name="Furuno M."/>
            <person name="Futaki S."/>
            <person name="Gariboldi M."/>
            <person name="Georgii-Hemming P."/>
            <person name="Gingeras T.R."/>
            <person name="Gojobori T."/>
            <person name="Green R.E."/>
            <person name="Gustincich S."/>
            <person name="Harbers M."/>
            <person name="Hayashi Y."/>
            <person name="Hensch T.K."/>
            <person name="Hirokawa N."/>
            <person name="Hill D."/>
            <person name="Huminiecki L."/>
            <person name="Iacono M."/>
            <person name="Ikeo K."/>
            <person name="Iwama A."/>
            <person name="Ishikawa T."/>
            <person name="Jakt M."/>
            <person name="Kanapin A."/>
            <person name="Katoh M."/>
            <person name="Kawasawa Y."/>
            <person name="Kelso J."/>
            <person name="Kitamura H."/>
            <person name="Kitano H."/>
            <person name="Kollias G."/>
            <person name="Krishnan S.P."/>
            <person name="Kruger A."/>
            <person name="Kummerfeld S.K."/>
            <person name="Kurochkin I.V."/>
            <person name="Lareau L.F."/>
            <person name="Lazarevic D."/>
            <person name="Lipovich L."/>
            <person name="Liu J."/>
            <person name="Liuni S."/>
            <person name="McWilliam S."/>
            <person name="Madan Babu M."/>
            <person name="Madera M."/>
            <person name="Marchionni L."/>
            <person name="Matsuda H."/>
            <person name="Matsuzawa S."/>
            <person name="Miki H."/>
            <person name="Mignone F."/>
            <person name="Miyake S."/>
            <person name="Morris K."/>
            <person name="Mottagui-Tabar S."/>
            <person name="Mulder N."/>
            <person name="Nakano N."/>
            <person name="Nakauchi H."/>
            <person name="Ng P."/>
            <person name="Nilsson R."/>
            <person name="Nishiguchi S."/>
            <person name="Nishikawa S."/>
            <person name="Nori F."/>
            <person name="Ohara O."/>
            <person name="Okazaki Y."/>
            <person name="Orlando V."/>
            <person name="Pang K.C."/>
            <person name="Pavan W.J."/>
            <person name="Pavesi G."/>
            <person name="Pesole G."/>
            <person name="Petrovsky N."/>
            <person name="Piazza S."/>
            <person name="Reed J."/>
            <person name="Reid J.F."/>
            <person name="Ring B.Z."/>
            <person name="Ringwald M."/>
            <person name="Rost B."/>
            <person name="Ruan Y."/>
            <person name="Salzberg S.L."/>
            <person name="Sandelin A."/>
            <person name="Schneider C."/>
            <person name="Schoenbach C."/>
            <person name="Sekiguchi K."/>
            <person name="Semple C.A."/>
            <person name="Seno S."/>
            <person name="Sessa L."/>
            <person name="Sheng Y."/>
            <person name="Shibata Y."/>
            <person name="Shimada H."/>
            <person name="Shimada K."/>
            <person name="Silva D."/>
            <person name="Sinclair B."/>
            <person name="Sperling S."/>
            <person name="Stupka E."/>
            <person name="Sugiura K."/>
            <person name="Sultana R."/>
            <person name="Takenaka Y."/>
            <person name="Taki K."/>
            <person name="Tammoja K."/>
            <person name="Tan S.L."/>
            <person name="Tang S."/>
            <person name="Taylor M.S."/>
            <person name="Tegner J."/>
            <person name="Teichmann S.A."/>
            <person name="Ueda H.R."/>
            <person name="van Nimwegen E."/>
            <person name="Verardo R."/>
            <person name="Wei C.L."/>
            <person name="Yagi K."/>
            <person name="Yamanishi H."/>
            <person name="Zabarovsky E."/>
            <person name="Zhu S."/>
            <person name="Zimmer A."/>
            <person name="Hide W."/>
            <person name="Bult C."/>
            <person name="Grimmond S.M."/>
            <person name="Teasdale R.D."/>
            <person name="Liu E.T."/>
            <person name="Brusic V."/>
            <person name="Quackenbush J."/>
            <person name="Wahlestedt C."/>
            <person name="Mattick J.S."/>
            <person name="Hume D.A."/>
            <person name="Kai C."/>
            <person name="Sasaki D."/>
            <person name="Tomaru Y."/>
            <person name="Fukuda S."/>
            <person name="Kanamori-Katayama M."/>
            <person name="Suzuki M."/>
            <person name="Aoki J."/>
            <person name="Arakawa T."/>
            <person name="Iida J."/>
            <person name="Imamura K."/>
            <person name="Itoh M."/>
            <person name="Kato T."/>
            <person name="Kawaji H."/>
            <person name="Kawagashira N."/>
            <person name="Kawashima T."/>
            <person name="Kojima M."/>
            <person name="Kondo S."/>
            <person name="Konno H."/>
            <person name="Nakano K."/>
            <person name="Ninomiya N."/>
            <person name="Nishio T."/>
            <person name="Okada M."/>
            <person name="Plessy C."/>
            <person name="Shibata K."/>
            <person name="Shiraki T."/>
            <person name="Suzuki S."/>
            <person name="Tagami M."/>
            <person name="Waki K."/>
            <person name="Watahiki A."/>
            <person name="Okamura-Oho Y."/>
            <person name="Suzuki H."/>
            <person name="Kawai J."/>
            <person name="Hayashizaki Y."/>
        </authorList>
    </citation>
    <scope>NUCLEOTIDE SEQUENCE [LARGE SCALE MRNA]</scope>
    <source>
        <strain>C57BL/6J</strain>
        <tissue>Placenta</tissue>
        <tissue>Thymus</tissue>
    </source>
</reference>
<reference key="6">
    <citation type="journal article" date="2004" name="Genome Res.">
        <title>The status, quality, and expansion of the NIH full-length cDNA project: the Mammalian Gene Collection (MGC).</title>
        <authorList>
            <consortium name="The MGC Project Team"/>
        </authorList>
    </citation>
    <scope>NUCLEOTIDE SEQUENCE [LARGE SCALE MRNA]</scope>
    <source>
        <strain>FVB/N</strain>
        <tissue>Mammary gland</tissue>
    </source>
</reference>
<reference key="7">
    <citation type="journal article" date="1991" name="Gene">
        <title>Isolation of a cathepsin B-encoding cDNA from murine osteogenic cells.</title>
        <authorList>
            <person name="Friemert C."/>
            <person name="Closs E.I."/>
            <person name="Silbermann M."/>
            <person name="Erfle V."/>
            <person name="Strauss P.G."/>
        </authorList>
    </citation>
    <scope>NUCLEOTIDE SEQUENCE [MRNA] OF 314-339</scope>
</reference>
<reference key="8">
    <citation type="journal article" date="2003" name="J. Clin. Invest.">
        <title>Thyroid functions of mouse cathepsins B, K, and L.</title>
        <authorList>
            <person name="Friedrichs B."/>
            <person name="Tepel C."/>
            <person name="Reinheckel T."/>
            <person name="Deussing J."/>
            <person name="von Figura K."/>
            <person name="Herzog V."/>
            <person name="Peters C."/>
            <person name="Saftig P."/>
            <person name="Brix K."/>
        </authorList>
    </citation>
    <scope>FUNCTION</scope>
    <scope>SUBCELLULAR LOCATION</scope>
    <scope>TISSUE SPECIFICITY</scope>
    <scope>DISRUPTION PHENOTYPE</scope>
</reference>
<reference key="9">
    <citation type="journal article" date="2010" name="Cell">
        <title>A tissue-specific atlas of mouse protein phosphorylation and expression.</title>
        <authorList>
            <person name="Huttlin E.L."/>
            <person name="Jedrychowski M.P."/>
            <person name="Elias J.E."/>
            <person name="Goswami T."/>
            <person name="Rad R."/>
            <person name="Beausoleil S.A."/>
            <person name="Villen J."/>
            <person name="Haas W."/>
            <person name="Sowa M.E."/>
            <person name="Gygi S.P."/>
        </authorList>
    </citation>
    <scope>IDENTIFICATION BY MASS SPECTROMETRY [LARGE SCALE ANALYSIS]</scope>
    <source>
        <tissue>Brain</tissue>
        <tissue>Brown adipose tissue</tissue>
        <tissue>Heart</tissue>
        <tissue>Kidney</tissue>
        <tissue>Liver</tissue>
        <tissue>Lung</tissue>
        <tissue>Pancreas</tissue>
        <tissue>Spleen</tissue>
        <tissue>Testis</tissue>
    </source>
</reference>
<reference key="10">
    <citation type="journal article" date="2013" name="Mol. Cell">
        <title>SIRT5-mediated lysine desuccinylation impacts diverse metabolic pathways.</title>
        <authorList>
            <person name="Park J."/>
            <person name="Chen Y."/>
            <person name="Tishkoff D.X."/>
            <person name="Peng C."/>
            <person name="Tan M."/>
            <person name="Dai L."/>
            <person name="Xie Z."/>
            <person name="Zhang Y."/>
            <person name="Zwaans B.M."/>
            <person name="Skinner M.E."/>
            <person name="Lombard D.B."/>
            <person name="Zhao Y."/>
        </authorList>
    </citation>
    <scope>ACETYLATION [LARGE SCALE ANALYSIS] AT LYS-220</scope>
    <scope>IDENTIFICATION BY MASS SPECTROMETRY [LARGE SCALE ANALYSIS]</scope>
    <source>
        <tissue>Embryonic fibroblast</tissue>
    </source>
</reference>
<dbReference type="EC" id="3.4.22.1" evidence="1"/>
<dbReference type="EMBL" id="M65270">
    <property type="protein sequence ID" value="AAA37375.1"/>
    <property type="molecule type" value="Genomic_DNA"/>
</dbReference>
<dbReference type="EMBL" id="M65263">
    <property type="protein sequence ID" value="AAA37375.1"/>
    <property type="status" value="JOINED"/>
    <property type="molecule type" value="Genomic_DNA"/>
</dbReference>
<dbReference type="EMBL" id="M65264">
    <property type="protein sequence ID" value="AAA37375.1"/>
    <property type="status" value="JOINED"/>
    <property type="molecule type" value="Genomic_DNA"/>
</dbReference>
<dbReference type="EMBL" id="M65265">
    <property type="protein sequence ID" value="AAA37375.1"/>
    <property type="status" value="JOINED"/>
    <property type="molecule type" value="Genomic_DNA"/>
</dbReference>
<dbReference type="EMBL" id="M65266">
    <property type="protein sequence ID" value="AAA37375.1"/>
    <property type="status" value="JOINED"/>
    <property type="molecule type" value="Genomic_DNA"/>
</dbReference>
<dbReference type="EMBL" id="M65267">
    <property type="protein sequence ID" value="AAA37375.1"/>
    <property type="status" value="JOINED"/>
    <property type="molecule type" value="Genomic_DNA"/>
</dbReference>
<dbReference type="EMBL" id="M65268">
    <property type="protein sequence ID" value="AAA37375.1"/>
    <property type="status" value="JOINED"/>
    <property type="molecule type" value="Genomic_DNA"/>
</dbReference>
<dbReference type="EMBL" id="M65269">
    <property type="protein sequence ID" value="AAA37375.1"/>
    <property type="status" value="JOINED"/>
    <property type="molecule type" value="Genomic_DNA"/>
</dbReference>
<dbReference type="EMBL" id="M14222">
    <property type="protein sequence ID" value="AAA37494.1"/>
    <property type="molecule type" value="mRNA"/>
</dbReference>
<dbReference type="EMBL" id="X54966">
    <property type="protein sequence ID" value="CAA38713.1"/>
    <property type="molecule type" value="mRNA"/>
</dbReference>
<dbReference type="EMBL" id="S69034">
    <property type="protein sequence ID" value="AAB20536.1"/>
    <property type="molecule type" value="mRNA"/>
</dbReference>
<dbReference type="EMBL" id="AK083393">
    <property type="protein sequence ID" value="BAC38900.1"/>
    <property type="molecule type" value="mRNA"/>
</dbReference>
<dbReference type="EMBL" id="AK147192">
    <property type="protein sequence ID" value="BAE27751.1"/>
    <property type="molecule type" value="mRNA"/>
</dbReference>
<dbReference type="EMBL" id="AK149884">
    <property type="protein sequence ID" value="BAE29144.1"/>
    <property type="molecule type" value="mRNA"/>
</dbReference>
<dbReference type="EMBL" id="AK151790">
    <property type="protein sequence ID" value="BAE30691.1"/>
    <property type="molecule type" value="mRNA"/>
</dbReference>
<dbReference type="EMBL" id="AK167361">
    <property type="protein sequence ID" value="BAE39458.1"/>
    <property type="molecule type" value="mRNA"/>
</dbReference>
<dbReference type="EMBL" id="BC006656">
    <property type="protein sequence ID" value="AAH06656.1"/>
    <property type="molecule type" value="mRNA"/>
</dbReference>
<dbReference type="CCDS" id="CCDS27197.1"/>
<dbReference type="PIR" id="A38458">
    <property type="entry name" value="KHMSB"/>
</dbReference>
<dbReference type="RefSeq" id="NP_031824.1">
    <property type="nucleotide sequence ID" value="NM_007798.3"/>
</dbReference>
<dbReference type="SMR" id="P10605"/>
<dbReference type="BioGRID" id="198968">
    <property type="interactions" value="20"/>
</dbReference>
<dbReference type="ComplexPortal" id="CPX-100">
    <property type="entry name" value="Cathepsin-B - cystatin-A complex"/>
</dbReference>
<dbReference type="FunCoup" id="P10605">
    <property type="interactions" value="1661"/>
</dbReference>
<dbReference type="IntAct" id="P10605">
    <property type="interactions" value="9"/>
</dbReference>
<dbReference type="MINT" id="P10605"/>
<dbReference type="STRING" id="10090.ENSMUSP00000006235"/>
<dbReference type="BindingDB" id="P10605"/>
<dbReference type="ChEMBL" id="CHEMBL5187"/>
<dbReference type="MEROPS" id="C01.060"/>
<dbReference type="GlyConnect" id="2189">
    <property type="glycosylation" value="3 N-Linked glycans (1 site)"/>
</dbReference>
<dbReference type="GlyCosmos" id="P10605">
    <property type="glycosylation" value="1 site, 3 glycans"/>
</dbReference>
<dbReference type="GlyGen" id="P10605">
    <property type="glycosylation" value="7 sites, 6 N-linked glycans (3 sites), 1 O-linked glycan (4 sites)"/>
</dbReference>
<dbReference type="iPTMnet" id="P10605"/>
<dbReference type="PhosphoSitePlus" id="P10605"/>
<dbReference type="SwissPalm" id="P10605"/>
<dbReference type="CPTAC" id="non-CPTAC-3564"/>
<dbReference type="jPOST" id="P10605"/>
<dbReference type="PaxDb" id="10090-ENSMUSP00000006235"/>
<dbReference type="PeptideAtlas" id="P10605"/>
<dbReference type="ProteomicsDB" id="281221"/>
<dbReference type="Pumba" id="P10605"/>
<dbReference type="ABCD" id="P10605">
    <property type="antibodies" value="1 sequenced antibody"/>
</dbReference>
<dbReference type="Antibodypedia" id="4373">
    <property type="antibodies" value="698 antibodies from 45 providers"/>
</dbReference>
<dbReference type="DNASU" id="13030"/>
<dbReference type="Ensembl" id="ENSMUST00000006235.9">
    <property type="protein sequence ID" value="ENSMUSP00000006235.8"/>
    <property type="gene ID" value="ENSMUSG00000021939.9"/>
</dbReference>
<dbReference type="GeneID" id="13030"/>
<dbReference type="KEGG" id="mmu:13030"/>
<dbReference type="UCSC" id="uc007uhh.2">
    <property type="organism name" value="mouse"/>
</dbReference>
<dbReference type="AGR" id="MGI:88561"/>
<dbReference type="CTD" id="1508"/>
<dbReference type="MGI" id="MGI:88561">
    <property type="gene designation" value="Ctsb"/>
</dbReference>
<dbReference type="VEuPathDB" id="HostDB:ENSMUSG00000021939"/>
<dbReference type="eggNOG" id="KOG1543">
    <property type="taxonomic scope" value="Eukaryota"/>
</dbReference>
<dbReference type="GeneTree" id="ENSGT00940000158680"/>
<dbReference type="HOGENOM" id="CLU_012184_3_3_1"/>
<dbReference type="InParanoid" id="P10605"/>
<dbReference type="OMA" id="DEKIPYW"/>
<dbReference type="OrthoDB" id="640249at2759"/>
<dbReference type="PhylomeDB" id="P10605"/>
<dbReference type="TreeFam" id="TF314576"/>
<dbReference type="BioCyc" id="MetaCyc:MONOMER-14810"/>
<dbReference type="BRENDA" id="3.4.22.1">
    <property type="organism ID" value="3474"/>
</dbReference>
<dbReference type="BRENDA" id="3.4.23.5">
    <property type="organism ID" value="3474"/>
</dbReference>
<dbReference type="Reactome" id="R-MMU-1442490">
    <property type="pathway name" value="Collagen degradation"/>
</dbReference>
<dbReference type="Reactome" id="R-MMU-1679131">
    <property type="pathway name" value="Trafficking and processing of endosomal TLR"/>
</dbReference>
<dbReference type="Reactome" id="R-MMU-2022090">
    <property type="pathway name" value="Assembly of collagen fibrils and other multimeric structures"/>
</dbReference>
<dbReference type="Reactome" id="R-MMU-2132295">
    <property type="pathway name" value="MHC class II antigen presentation"/>
</dbReference>
<dbReference type="Reactome" id="R-MMU-6798695">
    <property type="pathway name" value="Neutrophil degranulation"/>
</dbReference>
<dbReference type="BioGRID-ORCS" id="13030">
    <property type="hits" value="4 hits in 77 CRISPR screens"/>
</dbReference>
<dbReference type="ChiTaRS" id="Ctsb">
    <property type="organism name" value="mouse"/>
</dbReference>
<dbReference type="PRO" id="PR:P10605"/>
<dbReference type="Proteomes" id="UP000000589">
    <property type="component" value="Chromosome 14"/>
</dbReference>
<dbReference type="RNAct" id="P10605">
    <property type="molecule type" value="protein"/>
</dbReference>
<dbReference type="Bgee" id="ENSMUSG00000021939">
    <property type="expression patterns" value="Expressed in stroma of bone marrow and 280 other cell types or tissues"/>
</dbReference>
<dbReference type="GO" id="GO:0016324">
    <property type="term" value="C:apical plasma membrane"/>
    <property type="evidence" value="ECO:0007669"/>
    <property type="project" value="UniProtKB-SubCell"/>
</dbReference>
<dbReference type="GO" id="GO:0062023">
    <property type="term" value="C:collagen-containing extracellular matrix"/>
    <property type="evidence" value="ECO:0007005"/>
    <property type="project" value="BHF-UCL"/>
</dbReference>
<dbReference type="GO" id="GO:0009897">
    <property type="term" value="C:external side of plasma membrane"/>
    <property type="evidence" value="ECO:0000314"/>
    <property type="project" value="UniProtKB"/>
</dbReference>
<dbReference type="GO" id="GO:0005615">
    <property type="term" value="C:extracellular space"/>
    <property type="evidence" value="ECO:0000314"/>
    <property type="project" value="UniProtKB"/>
</dbReference>
<dbReference type="GO" id="GO:0005764">
    <property type="term" value="C:lysosome"/>
    <property type="evidence" value="ECO:0000314"/>
    <property type="project" value="UniProtKB"/>
</dbReference>
<dbReference type="GO" id="GO:0042470">
    <property type="term" value="C:melanosome"/>
    <property type="evidence" value="ECO:0007669"/>
    <property type="project" value="UniProtKB-SubCell"/>
</dbReference>
<dbReference type="GO" id="GO:0005739">
    <property type="term" value="C:mitochondrion"/>
    <property type="evidence" value="ECO:0007005"/>
    <property type="project" value="MGI"/>
</dbReference>
<dbReference type="GO" id="GO:1904090">
    <property type="term" value="C:peptidase inhibitor complex"/>
    <property type="evidence" value="ECO:0000266"/>
    <property type="project" value="ComplexPortal"/>
</dbReference>
<dbReference type="GO" id="GO:0048471">
    <property type="term" value="C:perinuclear region of cytoplasm"/>
    <property type="evidence" value="ECO:0007669"/>
    <property type="project" value="Ensembl"/>
</dbReference>
<dbReference type="GO" id="GO:0005518">
    <property type="term" value="F:collagen binding"/>
    <property type="evidence" value="ECO:0007669"/>
    <property type="project" value="Ensembl"/>
</dbReference>
<dbReference type="GO" id="GO:0004197">
    <property type="term" value="F:cysteine-type endopeptidase activity"/>
    <property type="evidence" value="ECO:0000314"/>
    <property type="project" value="MGI"/>
</dbReference>
<dbReference type="GO" id="GO:0008234">
    <property type="term" value="F:cysteine-type peptidase activity"/>
    <property type="evidence" value="ECO:0000314"/>
    <property type="project" value="MGI"/>
</dbReference>
<dbReference type="GO" id="GO:0004175">
    <property type="term" value="F:endopeptidase activity"/>
    <property type="evidence" value="ECO:0000315"/>
    <property type="project" value="UniProtKB"/>
</dbReference>
<dbReference type="GO" id="GO:0043394">
    <property type="term" value="F:proteoglycan binding"/>
    <property type="evidence" value="ECO:0007669"/>
    <property type="project" value="Ensembl"/>
</dbReference>
<dbReference type="GO" id="GO:0097067">
    <property type="term" value="P:cellular response to thyroid hormone stimulus"/>
    <property type="evidence" value="ECO:0007669"/>
    <property type="project" value="Ensembl"/>
</dbReference>
<dbReference type="GO" id="GO:0030574">
    <property type="term" value="P:collagen catabolic process"/>
    <property type="evidence" value="ECO:0007669"/>
    <property type="project" value="Ensembl"/>
</dbReference>
<dbReference type="GO" id="GO:0046697">
    <property type="term" value="P:decidualization"/>
    <property type="evidence" value="ECO:0000316"/>
    <property type="project" value="MGI"/>
</dbReference>
<dbReference type="GO" id="GO:0030855">
    <property type="term" value="P:epithelial cell differentiation"/>
    <property type="evidence" value="ECO:0007669"/>
    <property type="project" value="Ensembl"/>
</dbReference>
<dbReference type="GO" id="GO:0051603">
    <property type="term" value="P:proteolysis involved in protein catabolic process"/>
    <property type="evidence" value="ECO:0000315"/>
    <property type="project" value="UniProtKB"/>
</dbReference>
<dbReference type="GO" id="GO:0046718">
    <property type="term" value="P:symbiont entry into host cell"/>
    <property type="evidence" value="ECO:0000315"/>
    <property type="project" value="CACAO"/>
</dbReference>
<dbReference type="GO" id="GO:0006590">
    <property type="term" value="P:thyroid hormone generation"/>
    <property type="evidence" value="ECO:0000315"/>
    <property type="project" value="UniProtKB"/>
</dbReference>
<dbReference type="CDD" id="cd02620">
    <property type="entry name" value="Peptidase_C1A_CathepsinB"/>
    <property type="match status" value="1"/>
</dbReference>
<dbReference type="FunFam" id="3.90.70.10:FF:000031">
    <property type="entry name" value="Cathepsin B"/>
    <property type="match status" value="1"/>
</dbReference>
<dbReference type="Gene3D" id="3.90.70.10">
    <property type="entry name" value="Cysteine proteinases"/>
    <property type="match status" value="1"/>
</dbReference>
<dbReference type="InterPro" id="IPR038765">
    <property type="entry name" value="Papain-like_cys_pep_sf"/>
</dbReference>
<dbReference type="InterPro" id="IPR025661">
    <property type="entry name" value="Pept_asp_AS"/>
</dbReference>
<dbReference type="InterPro" id="IPR000169">
    <property type="entry name" value="Pept_cys_AS"/>
</dbReference>
<dbReference type="InterPro" id="IPR025660">
    <property type="entry name" value="Pept_his_AS"/>
</dbReference>
<dbReference type="InterPro" id="IPR013128">
    <property type="entry name" value="Peptidase_C1A"/>
</dbReference>
<dbReference type="InterPro" id="IPR000668">
    <property type="entry name" value="Peptidase_C1A_C"/>
</dbReference>
<dbReference type="InterPro" id="IPR012599">
    <property type="entry name" value="Propeptide_C1A"/>
</dbReference>
<dbReference type="PANTHER" id="PTHR12411">
    <property type="entry name" value="CYSTEINE PROTEASE FAMILY C1-RELATED"/>
    <property type="match status" value="1"/>
</dbReference>
<dbReference type="Pfam" id="PF00112">
    <property type="entry name" value="Peptidase_C1"/>
    <property type="match status" value="1"/>
</dbReference>
<dbReference type="Pfam" id="PF08127">
    <property type="entry name" value="Propeptide_C1"/>
    <property type="match status" value="1"/>
</dbReference>
<dbReference type="PRINTS" id="PR00705">
    <property type="entry name" value="PAPAIN"/>
</dbReference>
<dbReference type="SMART" id="SM00645">
    <property type="entry name" value="Pept_C1"/>
    <property type="match status" value="1"/>
</dbReference>
<dbReference type="SUPFAM" id="SSF54001">
    <property type="entry name" value="Cysteine proteinases"/>
    <property type="match status" value="1"/>
</dbReference>
<dbReference type="PROSITE" id="PS00640">
    <property type="entry name" value="THIOL_PROTEASE_ASN"/>
    <property type="match status" value="1"/>
</dbReference>
<dbReference type="PROSITE" id="PS00139">
    <property type="entry name" value="THIOL_PROTEASE_CYS"/>
    <property type="match status" value="1"/>
</dbReference>
<dbReference type="PROSITE" id="PS00639">
    <property type="entry name" value="THIOL_PROTEASE_HIS"/>
    <property type="match status" value="1"/>
</dbReference>
<organism>
    <name type="scientific">Mus musculus</name>
    <name type="common">Mouse</name>
    <dbReference type="NCBI Taxonomy" id="10090"/>
    <lineage>
        <taxon>Eukaryota</taxon>
        <taxon>Metazoa</taxon>
        <taxon>Chordata</taxon>
        <taxon>Craniata</taxon>
        <taxon>Vertebrata</taxon>
        <taxon>Euteleostomi</taxon>
        <taxon>Mammalia</taxon>
        <taxon>Eutheria</taxon>
        <taxon>Euarchontoglires</taxon>
        <taxon>Glires</taxon>
        <taxon>Rodentia</taxon>
        <taxon>Myomorpha</taxon>
        <taxon>Muroidea</taxon>
        <taxon>Muridae</taxon>
        <taxon>Murinae</taxon>
        <taxon>Mus</taxon>
        <taxon>Mus</taxon>
    </lineage>
</organism>
<sequence length="339" mass="37280">MWWSLILLSCLLALTSAHDKPSFHPLSDDLINYINKQNTTWQAGRNFYNVDISYLKKLCGTVLGGPKLPGRVAFGEDIDLPETFDAREQWSNCPTIGQIRDQGSCGSCWAFGAVEAISDRTCIHTNGRVNVEVSAEDLLTCCGIQCGDGCNGGYPSGAWSFWTKKGLVSGGVYNSHVGCLPYTIPPCEHHVNGSRPPCTGEGDTPRCNKSCEAGYSPSYKEDKHFGYTSYSVSNSVKEIMAEIYKNGPVEGAFTVFSDFLTYKSGVYKHEAGDMMGGHAIRILGWGVENGVPYWLAANSWNLDWGDNGFFKILRGENHCGIESEIVAGIPRTDQYWGRF</sequence>
<keyword id="KW-0007">Acetylation</keyword>
<keyword id="KW-1003">Cell membrane</keyword>
<keyword id="KW-1015">Disulfide bond</keyword>
<keyword id="KW-0325">Glycoprotein</keyword>
<keyword id="KW-0378">Hydrolase</keyword>
<keyword id="KW-0458">Lysosome</keyword>
<keyword id="KW-0472">Membrane</keyword>
<keyword id="KW-0645">Protease</keyword>
<keyword id="KW-1185">Reference proteome</keyword>
<keyword id="KW-0964">Secreted</keyword>
<keyword id="KW-0732">Signal</keyword>
<keyword id="KW-0788">Thiol protease</keyword>
<keyword id="KW-0865">Zymogen</keyword>